<sequence>MLKHFARWRLGSQLLKGCAAPVRQASKTSSAENLIAGTEEPQKKFVNPFSQPAPALSNDTISENKEERDKRLKVLQLEADIAHQEGRRVPSLEFFKDHHWEHVLTLPTKSARIKYFGYLWQIEMKKEADQRKKAERAKEAERRVAEMRKEREENTHIIYGLGHTSLFLRIYDTTINHWQNNRLTRAMQFAPKMVLDCSYDEHMNNREATYAAKQLMMCFAENRMNDEPFDLHYCNTQMDSRCMQSLQRYIPTMHNPEFPINLHSKCFTELFPKQNLVYLTPHCREDLVTYNPDDIYIVGAMVDTMNNEPLSLAKAKRLGLRMARLPLDRYLQWGSGSGKSLTLNQMINIMLDLKKTGDWDTALKHVPRRKVVQNEFQPRREKDHWSTGTRARKLNMRIDHLFDFDENRRQATSYATPQNVRQRREGLEFQLDTWATGKQKKKQRQN</sequence>
<protein>
    <recommendedName>
        <fullName evidence="10">Mitochondrial ribonuclease P protein 1 homolog</fullName>
        <shortName evidence="1">Mitochondrial RNase P protein 1</shortName>
        <ecNumber evidence="3">2.1.1.-</ecNumber>
    </recommendedName>
    <alternativeName>
        <fullName evidence="9">Protein roswell</fullName>
    </alternativeName>
    <alternativeName>
        <fullName evidence="1">RNA (guanine-9-)-methyltransferase domain-containing protein 1</fullName>
    </alternativeName>
    <alternativeName>
        <fullName evidence="1">tRNA methyltransferase 10 homolog C</fullName>
    </alternativeName>
</protein>
<keyword id="KW-0175">Coiled coil</keyword>
<keyword id="KW-0489">Methyltransferase</keyword>
<keyword id="KW-0496">Mitochondrion</keyword>
<keyword id="KW-0597">Phosphoprotein</keyword>
<keyword id="KW-1185">Reference proteome</keyword>
<keyword id="KW-0949">S-adenosyl-L-methionine</keyword>
<keyword id="KW-0808">Transferase</keyword>
<keyword id="KW-0809">Transit peptide</keyword>
<keyword id="KW-0819">tRNA processing</keyword>
<feature type="transit peptide" description="Mitochondrion" evidence="2">
    <location>
        <begin position="1"/>
        <end position="24"/>
    </location>
</feature>
<feature type="chain" id="PRO_0000311313" description="Mitochondrial ribonuclease P protein 1 homolog">
    <location>
        <begin position="25"/>
        <end position="446"/>
    </location>
</feature>
<feature type="domain" description="SAM-dependent MTase TRM10-type" evidence="3">
    <location>
        <begin position="179"/>
        <end position="373"/>
    </location>
</feature>
<feature type="region of interest" description="Disordered" evidence="4">
    <location>
        <begin position="41"/>
        <end position="67"/>
    </location>
</feature>
<feature type="coiled-coil region" evidence="2">
    <location>
        <begin position="119"/>
        <end position="158"/>
    </location>
</feature>
<feature type="modified residue" description="Phosphoserine" evidence="5">
    <location>
        <position position="50"/>
    </location>
</feature>
<feature type="modified residue" description="Phosphoserine" evidence="5">
    <location>
        <position position="57"/>
    </location>
</feature>
<feature type="modified residue" description="Phosphothreonine" evidence="5">
    <location>
        <position position="60"/>
    </location>
</feature>
<feature type="modified residue" description="Phosphoserine" evidence="5">
    <location>
        <position position="62"/>
    </location>
</feature>
<name>MRRP1_DROME</name>
<comment type="function">
    <text evidence="6 7 8">Mitochondrial tRNA N1-methyltransferase involved in mitochondrial tRNA maturation (PubMed:27131785, PubMed:34199774, PubMed:35663400). Component of mitochondrial ribonuclease P, a complex composed of rswl/MRPP1, scu/MRPP2 and mldr/MRPP3., which cleaves tRNA molecules in their 5'-ends (PubMed:27131785). Essential for the structural and functional integrity of mitochondria (PubMed:27131785, PubMed:34199774, PubMed:35663400). Function is essential for pupal development (PubMed:34199774, PubMed:35663400).</text>
</comment>
<comment type="subunit">
    <text evidence="6">Component of mitochondrial ribonuclease P, a complex composed of rswl/MRPP1, scu/MRPP2 and mldr/MRPP3.</text>
</comment>
<comment type="subcellular location">
    <subcellularLocation>
        <location evidence="6 7">Mitochondrion</location>
    </subcellularLocation>
</comment>
<comment type="disruption phenotype">
    <text evidence="6 7 8">Pupal lethal (PubMed:34199774). Pupation is developmentally delayed and pupae fail to enclose into adults (PubMed:34199774). Larvae display reduced ATP levels and mitochondrial swelling in the neuroblasts (PubMed:34199774). Strong RNAi-mediated knockdown is pupae lethal, with pupae failing to pupate (PubMed:27131785). Larvae also display reduced levels of ATP and the accumulation of unprocessed mitochondrial tRNAs transcripts for tRNA(Ile), tRNA(Gly), tRNA(Val) and tRNA(Leu)(CUN) (PubMed:27131785). Larvae neuroblast mitochondrial morphology is not affected (PubMed:27131785). Conditional RNAi-mediated knockdown in different tissues, produce various phenotypes that result from adherent, dysfunctional mitochondria (PubMed:27131785, PubMed:35663400). RNAi-mediated knockdown in skeletal muscle is pupal lethal (PubMed:35663400). Pupation rates are normal but pupae fail to enclose (PubMed:35663400). Reduces sarcomere size, and affects myofibril organization and structure (PubMed:35663400). Also results in mitochondrial defects and reduces levels of ATP (PubMed:35663400). Cardiac-specific RNAi-mediated knockdown reduces lifespan and results in adult wing defects (PubMed:35663400). Adult hearts also have impaired contractility and increased arrhythmia (PubMed:35663400). RNAi-mediated knockdown in dopaminergic neurons has no effect on climbing ability (PubMed:27131785).</text>
</comment>
<comment type="similarity">
    <text evidence="3">Belongs to the class IV-like SAM-binding methyltransferase superfamily. TRM10 family.</text>
</comment>
<proteinExistence type="evidence at protein level"/>
<accession>Q7JUX9</accession>
<gene>
    <name evidence="9 11" type="primary">rswl</name>
    <name evidence="9" type="synonym">MRPP1</name>
    <name evidence="10" type="synonym">trmt10c</name>
    <name evidence="11" type="ORF">CG5190</name>
</gene>
<organism>
    <name type="scientific">Drosophila melanogaster</name>
    <name type="common">Fruit fly</name>
    <dbReference type="NCBI Taxonomy" id="7227"/>
    <lineage>
        <taxon>Eukaryota</taxon>
        <taxon>Metazoa</taxon>
        <taxon>Ecdysozoa</taxon>
        <taxon>Arthropoda</taxon>
        <taxon>Hexapoda</taxon>
        <taxon>Insecta</taxon>
        <taxon>Pterygota</taxon>
        <taxon>Neoptera</taxon>
        <taxon>Endopterygota</taxon>
        <taxon>Diptera</taxon>
        <taxon>Brachycera</taxon>
        <taxon>Muscomorpha</taxon>
        <taxon>Ephydroidea</taxon>
        <taxon>Drosophilidae</taxon>
        <taxon>Drosophila</taxon>
        <taxon>Sophophora</taxon>
    </lineage>
</organism>
<dbReference type="EC" id="2.1.1.-" evidence="3"/>
<dbReference type="EMBL" id="AE013599">
    <property type="protein sequence ID" value="AAF57683.1"/>
    <property type="molecule type" value="Genomic_DNA"/>
</dbReference>
<dbReference type="EMBL" id="AY119619">
    <property type="protein sequence ID" value="AAM50273.1"/>
    <property type="molecule type" value="mRNA"/>
</dbReference>
<dbReference type="RefSeq" id="NP_611335.1">
    <property type="nucleotide sequence ID" value="NM_137491.4"/>
</dbReference>
<dbReference type="SMR" id="Q7JUX9"/>
<dbReference type="BioGRID" id="62800">
    <property type="interactions" value="4"/>
</dbReference>
<dbReference type="ComplexPortal" id="CPX-2632">
    <property type="entry name" value="Mitochondrial ribonuclease P complex"/>
</dbReference>
<dbReference type="FunCoup" id="Q7JUX9">
    <property type="interactions" value="1408"/>
</dbReference>
<dbReference type="IntAct" id="Q7JUX9">
    <property type="interactions" value="8"/>
</dbReference>
<dbReference type="STRING" id="7227.FBpp0085875"/>
<dbReference type="iPTMnet" id="Q7JUX9"/>
<dbReference type="PaxDb" id="7227-FBpp0085875"/>
<dbReference type="DNASU" id="37124"/>
<dbReference type="EnsemblMetazoa" id="FBtr0086696">
    <property type="protein sequence ID" value="FBpp0085875"/>
    <property type="gene ID" value="FBgn0034351"/>
</dbReference>
<dbReference type="GeneID" id="37124"/>
<dbReference type="KEGG" id="dme:Dmel_CG5190"/>
<dbReference type="UCSC" id="CG5190-RA">
    <property type="organism name" value="d. melanogaster"/>
</dbReference>
<dbReference type="AGR" id="FB:FBgn0034351"/>
<dbReference type="CTD" id="37124"/>
<dbReference type="FlyBase" id="FBgn0034351">
    <property type="gene designation" value="rswl"/>
</dbReference>
<dbReference type="VEuPathDB" id="VectorBase:FBgn0034351"/>
<dbReference type="eggNOG" id="KOG2967">
    <property type="taxonomic scope" value="Eukaryota"/>
</dbReference>
<dbReference type="GeneTree" id="ENSGT00530000063169"/>
<dbReference type="HOGENOM" id="CLU_034384_3_0_1"/>
<dbReference type="InParanoid" id="Q7JUX9"/>
<dbReference type="OMA" id="HHWEHVL"/>
<dbReference type="OrthoDB" id="9976048at2759"/>
<dbReference type="PhylomeDB" id="Q7JUX9"/>
<dbReference type="SignaLink" id="Q7JUX9"/>
<dbReference type="BioGRID-ORCS" id="37124">
    <property type="hits" value="0 hits in 1 CRISPR screen"/>
</dbReference>
<dbReference type="GenomeRNAi" id="37124"/>
<dbReference type="PRO" id="PR:Q7JUX9"/>
<dbReference type="Proteomes" id="UP000000803">
    <property type="component" value="Chromosome 2R"/>
</dbReference>
<dbReference type="Bgee" id="FBgn0034351">
    <property type="expression patterns" value="Expressed in transmedullary neuron Tm5c (Drosophila) in brain and 72 other cell types or tissues"/>
</dbReference>
<dbReference type="GO" id="GO:0030678">
    <property type="term" value="C:mitochondrial ribonuclease P complex"/>
    <property type="evidence" value="ECO:0000314"/>
    <property type="project" value="FlyBase"/>
</dbReference>
<dbReference type="GO" id="GO:0005739">
    <property type="term" value="C:mitochondrion"/>
    <property type="evidence" value="ECO:0000314"/>
    <property type="project" value="UniProtKB"/>
</dbReference>
<dbReference type="GO" id="GO:0005654">
    <property type="term" value="C:nucleoplasm"/>
    <property type="evidence" value="ECO:0000318"/>
    <property type="project" value="GO_Central"/>
</dbReference>
<dbReference type="GO" id="GO:0005634">
    <property type="term" value="C:nucleus"/>
    <property type="evidence" value="ECO:0000318"/>
    <property type="project" value="GO_Central"/>
</dbReference>
<dbReference type="GO" id="GO:0160106">
    <property type="term" value="F:tRNA (adenine(9)-N1)-methyltransferase activity"/>
    <property type="evidence" value="ECO:0000250"/>
    <property type="project" value="FlyBase"/>
</dbReference>
<dbReference type="GO" id="GO:0052905">
    <property type="term" value="F:tRNA (guanosine(9)-N1)-methyltransferase activity"/>
    <property type="evidence" value="ECO:0000250"/>
    <property type="project" value="FlyBase"/>
</dbReference>
<dbReference type="GO" id="GO:0000049">
    <property type="term" value="F:tRNA binding"/>
    <property type="evidence" value="ECO:0000318"/>
    <property type="project" value="GO_Central"/>
</dbReference>
<dbReference type="GO" id="GO:0032259">
    <property type="term" value="P:methylation"/>
    <property type="evidence" value="ECO:0007669"/>
    <property type="project" value="UniProtKB-KW"/>
</dbReference>
<dbReference type="GO" id="GO:0097745">
    <property type="term" value="P:mitochondrial tRNA 5'-end processing"/>
    <property type="evidence" value="ECO:0000318"/>
    <property type="project" value="GO_Central"/>
</dbReference>
<dbReference type="GO" id="GO:0090646">
    <property type="term" value="P:mitochondrial tRNA processing"/>
    <property type="evidence" value="ECO:0000315"/>
    <property type="project" value="FlyBase"/>
</dbReference>
<dbReference type="GO" id="GO:0070131">
    <property type="term" value="P:positive regulation of mitochondrial translation"/>
    <property type="evidence" value="ECO:0000318"/>
    <property type="project" value="GO_Central"/>
</dbReference>
<dbReference type="CDD" id="cd18102">
    <property type="entry name" value="Trm10_MRRP1"/>
    <property type="match status" value="1"/>
</dbReference>
<dbReference type="FunFam" id="3.40.1280.30:FF:000003">
    <property type="entry name" value="tRNA methyltransferase 10C, mitochondrial RNase P subunit"/>
    <property type="match status" value="1"/>
</dbReference>
<dbReference type="Gene3D" id="3.40.1280.30">
    <property type="match status" value="1"/>
</dbReference>
<dbReference type="InterPro" id="IPR028564">
    <property type="entry name" value="MT_TRM10-typ"/>
</dbReference>
<dbReference type="InterPro" id="IPR038459">
    <property type="entry name" value="MT_TRM10-typ_sf"/>
</dbReference>
<dbReference type="InterPro" id="IPR025812">
    <property type="entry name" value="Trm10_C_MTase_dom"/>
</dbReference>
<dbReference type="InterPro" id="IPR007356">
    <property type="entry name" value="tRNA_m1G_MeTrfase_euk"/>
</dbReference>
<dbReference type="InterPro" id="IPR016009">
    <property type="entry name" value="tRNA_MeTrfase_TRMD/TRM10"/>
</dbReference>
<dbReference type="PANTHER" id="PTHR13563">
    <property type="entry name" value="TRNA (GUANINE-9-) METHYLTRANSFERASE"/>
    <property type="match status" value="1"/>
</dbReference>
<dbReference type="PANTHER" id="PTHR13563:SF5">
    <property type="entry name" value="TRNA METHYLTRANSFERASE 10 HOMOLOG C"/>
    <property type="match status" value="1"/>
</dbReference>
<dbReference type="Pfam" id="PF01746">
    <property type="entry name" value="tRNA_m1G_MT"/>
    <property type="match status" value="1"/>
</dbReference>
<dbReference type="PROSITE" id="PS51675">
    <property type="entry name" value="SAM_MT_TRM10"/>
    <property type="match status" value="1"/>
</dbReference>
<reference key="1">
    <citation type="journal article" date="2000" name="Science">
        <title>The genome sequence of Drosophila melanogaster.</title>
        <authorList>
            <person name="Adams M.D."/>
            <person name="Celniker S.E."/>
            <person name="Holt R.A."/>
            <person name="Evans C.A."/>
            <person name="Gocayne J.D."/>
            <person name="Amanatides P.G."/>
            <person name="Scherer S.E."/>
            <person name="Li P.W."/>
            <person name="Hoskins R.A."/>
            <person name="Galle R.F."/>
            <person name="George R.A."/>
            <person name="Lewis S.E."/>
            <person name="Richards S."/>
            <person name="Ashburner M."/>
            <person name="Henderson S.N."/>
            <person name="Sutton G.G."/>
            <person name="Wortman J.R."/>
            <person name="Yandell M.D."/>
            <person name="Zhang Q."/>
            <person name="Chen L.X."/>
            <person name="Brandon R.C."/>
            <person name="Rogers Y.-H.C."/>
            <person name="Blazej R.G."/>
            <person name="Champe M."/>
            <person name="Pfeiffer B.D."/>
            <person name="Wan K.H."/>
            <person name="Doyle C."/>
            <person name="Baxter E.G."/>
            <person name="Helt G."/>
            <person name="Nelson C.R."/>
            <person name="Miklos G.L.G."/>
            <person name="Abril J.F."/>
            <person name="Agbayani A."/>
            <person name="An H.-J."/>
            <person name="Andrews-Pfannkoch C."/>
            <person name="Baldwin D."/>
            <person name="Ballew R.M."/>
            <person name="Basu A."/>
            <person name="Baxendale J."/>
            <person name="Bayraktaroglu L."/>
            <person name="Beasley E.M."/>
            <person name="Beeson K.Y."/>
            <person name="Benos P.V."/>
            <person name="Berman B.P."/>
            <person name="Bhandari D."/>
            <person name="Bolshakov S."/>
            <person name="Borkova D."/>
            <person name="Botchan M.R."/>
            <person name="Bouck J."/>
            <person name="Brokstein P."/>
            <person name="Brottier P."/>
            <person name="Burtis K.C."/>
            <person name="Busam D.A."/>
            <person name="Butler H."/>
            <person name="Cadieu E."/>
            <person name="Center A."/>
            <person name="Chandra I."/>
            <person name="Cherry J.M."/>
            <person name="Cawley S."/>
            <person name="Dahlke C."/>
            <person name="Davenport L.B."/>
            <person name="Davies P."/>
            <person name="de Pablos B."/>
            <person name="Delcher A."/>
            <person name="Deng Z."/>
            <person name="Mays A.D."/>
            <person name="Dew I."/>
            <person name="Dietz S.M."/>
            <person name="Dodson K."/>
            <person name="Doup L.E."/>
            <person name="Downes M."/>
            <person name="Dugan-Rocha S."/>
            <person name="Dunkov B.C."/>
            <person name="Dunn P."/>
            <person name="Durbin K.J."/>
            <person name="Evangelista C.C."/>
            <person name="Ferraz C."/>
            <person name="Ferriera S."/>
            <person name="Fleischmann W."/>
            <person name="Fosler C."/>
            <person name="Gabrielian A.E."/>
            <person name="Garg N.S."/>
            <person name="Gelbart W.M."/>
            <person name="Glasser K."/>
            <person name="Glodek A."/>
            <person name="Gong F."/>
            <person name="Gorrell J.H."/>
            <person name="Gu Z."/>
            <person name="Guan P."/>
            <person name="Harris M."/>
            <person name="Harris N.L."/>
            <person name="Harvey D.A."/>
            <person name="Heiman T.J."/>
            <person name="Hernandez J.R."/>
            <person name="Houck J."/>
            <person name="Hostin D."/>
            <person name="Houston K.A."/>
            <person name="Howland T.J."/>
            <person name="Wei M.-H."/>
            <person name="Ibegwam C."/>
            <person name="Jalali M."/>
            <person name="Kalush F."/>
            <person name="Karpen G.H."/>
            <person name="Ke Z."/>
            <person name="Kennison J.A."/>
            <person name="Ketchum K.A."/>
            <person name="Kimmel B.E."/>
            <person name="Kodira C.D."/>
            <person name="Kraft C.L."/>
            <person name="Kravitz S."/>
            <person name="Kulp D."/>
            <person name="Lai Z."/>
            <person name="Lasko P."/>
            <person name="Lei Y."/>
            <person name="Levitsky A.A."/>
            <person name="Li J.H."/>
            <person name="Li Z."/>
            <person name="Liang Y."/>
            <person name="Lin X."/>
            <person name="Liu X."/>
            <person name="Mattei B."/>
            <person name="McIntosh T.C."/>
            <person name="McLeod M.P."/>
            <person name="McPherson D."/>
            <person name="Merkulov G."/>
            <person name="Milshina N.V."/>
            <person name="Mobarry C."/>
            <person name="Morris J."/>
            <person name="Moshrefi A."/>
            <person name="Mount S.M."/>
            <person name="Moy M."/>
            <person name="Murphy B."/>
            <person name="Murphy L."/>
            <person name="Muzny D.M."/>
            <person name="Nelson D.L."/>
            <person name="Nelson D.R."/>
            <person name="Nelson K.A."/>
            <person name="Nixon K."/>
            <person name="Nusskern D.R."/>
            <person name="Pacleb J.M."/>
            <person name="Palazzolo M."/>
            <person name="Pittman G.S."/>
            <person name="Pan S."/>
            <person name="Pollard J."/>
            <person name="Puri V."/>
            <person name="Reese M.G."/>
            <person name="Reinert K."/>
            <person name="Remington K."/>
            <person name="Saunders R.D.C."/>
            <person name="Scheeler F."/>
            <person name="Shen H."/>
            <person name="Shue B.C."/>
            <person name="Siden-Kiamos I."/>
            <person name="Simpson M."/>
            <person name="Skupski M.P."/>
            <person name="Smith T.J."/>
            <person name="Spier E."/>
            <person name="Spradling A.C."/>
            <person name="Stapleton M."/>
            <person name="Strong R."/>
            <person name="Sun E."/>
            <person name="Svirskas R."/>
            <person name="Tector C."/>
            <person name="Turner R."/>
            <person name="Venter E."/>
            <person name="Wang A.H."/>
            <person name="Wang X."/>
            <person name="Wang Z.-Y."/>
            <person name="Wassarman D.A."/>
            <person name="Weinstock G.M."/>
            <person name="Weissenbach J."/>
            <person name="Williams S.M."/>
            <person name="Woodage T."/>
            <person name="Worley K.C."/>
            <person name="Wu D."/>
            <person name="Yang S."/>
            <person name="Yao Q.A."/>
            <person name="Ye J."/>
            <person name="Yeh R.-F."/>
            <person name="Zaveri J.S."/>
            <person name="Zhan M."/>
            <person name="Zhang G."/>
            <person name="Zhao Q."/>
            <person name="Zheng L."/>
            <person name="Zheng X.H."/>
            <person name="Zhong F.N."/>
            <person name="Zhong W."/>
            <person name="Zhou X."/>
            <person name="Zhu S.C."/>
            <person name="Zhu X."/>
            <person name="Smith H.O."/>
            <person name="Gibbs R.A."/>
            <person name="Myers E.W."/>
            <person name="Rubin G.M."/>
            <person name="Venter J.C."/>
        </authorList>
    </citation>
    <scope>NUCLEOTIDE SEQUENCE [LARGE SCALE GENOMIC DNA]</scope>
    <source>
        <strain>Berkeley</strain>
    </source>
</reference>
<reference key="2">
    <citation type="journal article" date="2002" name="Genome Biol.">
        <title>Annotation of the Drosophila melanogaster euchromatic genome: a systematic review.</title>
        <authorList>
            <person name="Misra S."/>
            <person name="Crosby M.A."/>
            <person name="Mungall C.J."/>
            <person name="Matthews B.B."/>
            <person name="Campbell K.S."/>
            <person name="Hradecky P."/>
            <person name="Huang Y."/>
            <person name="Kaminker J.S."/>
            <person name="Millburn G.H."/>
            <person name="Prochnik S.E."/>
            <person name="Smith C.D."/>
            <person name="Tupy J.L."/>
            <person name="Whitfield E.J."/>
            <person name="Bayraktaroglu L."/>
            <person name="Berman B.P."/>
            <person name="Bettencourt B.R."/>
            <person name="Celniker S.E."/>
            <person name="de Grey A.D.N.J."/>
            <person name="Drysdale R.A."/>
            <person name="Harris N.L."/>
            <person name="Richter J."/>
            <person name="Russo S."/>
            <person name="Schroeder A.J."/>
            <person name="Shu S.Q."/>
            <person name="Stapleton M."/>
            <person name="Yamada C."/>
            <person name="Ashburner M."/>
            <person name="Gelbart W.M."/>
            <person name="Rubin G.M."/>
            <person name="Lewis S.E."/>
        </authorList>
    </citation>
    <scope>GENOME REANNOTATION</scope>
    <source>
        <strain>Berkeley</strain>
    </source>
</reference>
<reference key="3">
    <citation type="journal article" date="2002" name="Genome Biol.">
        <title>A Drosophila full-length cDNA resource.</title>
        <authorList>
            <person name="Stapleton M."/>
            <person name="Carlson J.W."/>
            <person name="Brokstein P."/>
            <person name="Yu C."/>
            <person name="Champe M."/>
            <person name="George R.A."/>
            <person name="Guarin H."/>
            <person name="Kronmiller B."/>
            <person name="Pacleb J.M."/>
            <person name="Park S."/>
            <person name="Wan K.H."/>
            <person name="Rubin G.M."/>
            <person name="Celniker S.E."/>
        </authorList>
    </citation>
    <scope>NUCLEOTIDE SEQUENCE [LARGE SCALE MRNA]</scope>
    <source>
        <strain>Berkeley</strain>
        <tissue>Embryo</tissue>
    </source>
</reference>
<reference key="4">
    <citation type="journal article" date="2008" name="J. Proteome Res.">
        <title>Phosphoproteome analysis of Drosophila melanogaster embryos.</title>
        <authorList>
            <person name="Zhai B."/>
            <person name="Villen J."/>
            <person name="Beausoleil S.A."/>
            <person name="Mintseris J."/>
            <person name="Gygi S.P."/>
        </authorList>
    </citation>
    <scope>PHOSPHORYLATION [LARGE SCALE ANALYSIS] AT SER-50; SER-57; THR-60 AND SER-62</scope>
    <scope>IDENTIFICATION BY MASS SPECTROMETRY</scope>
    <source>
        <tissue>Embryo</tissue>
    </source>
</reference>
<reference key="5">
    <citation type="journal article" date="2016" name="Nucleic Acids Res.">
        <title>Loss of the mitochondrial protein-only ribonuclease P complex causes aberrant tRNA processing and lethality in Drosophila.</title>
        <authorList>
            <person name="Sen A."/>
            <person name="Karasik A."/>
            <person name="Shanmuganathan A."/>
            <person name="Mirkovic E."/>
            <person name="Koutmos M."/>
            <person name="Cox R.T."/>
        </authorList>
    </citation>
    <scope>FUNCTION</scope>
    <scope>IDENTIFICATION IN THE MITOCHONDRIAL RIBONUCLEASE P COMPLEX</scope>
    <scope>SUBCELLULAR LOCATION</scope>
    <scope>DISRUPTION PHENOTYPE</scope>
</reference>
<reference key="6">
    <citation type="journal article" date="2021" name="Int. J. Mol. Sci.">
        <title>Loss of Individual Mitochondrial Ribonuclease P Complex Proteins Differentially Affects Mitochondrial tRNA Processing In Vivo.</title>
        <authorList>
            <person name="Saoji M."/>
            <person name="Sen A."/>
            <person name="Cox R.T."/>
        </authorList>
    </citation>
    <scope>FUNCTION</scope>
    <scope>SUBCELLULAR LOCATION</scope>
    <scope>DISRUPTION PHENOTYPE</scope>
</reference>
<reference key="7">
    <citation type="journal article" date="2022" name="Front. Cell Dev. Biol.">
        <title>Reduction of Drosophila Mitochondrial RNase P in Skeletal and Heart Muscle Causes Muscle Degeneration, Cardiomyopathy, and Heart Arrhythmia.</title>
        <authorList>
            <person name="Saoji M."/>
            <person name="Petersen C.E."/>
            <person name="Sen A."/>
            <person name="Tripoli B.A."/>
            <person name="Smyth J.T."/>
            <person name="Cox R.T."/>
        </authorList>
    </citation>
    <scope>FUNCTION</scope>
    <scope>DISRUPTION PHENOTYPE</scope>
</reference>
<evidence type="ECO:0000250" key="1">
    <source>
        <dbReference type="UniProtKB" id="Q7L0Y3"/>
    </source>
</evidence>
<evidence type="ECO:0000255" key="2"/>
<evidence type="ECO:0000255" key="3">
    <source>
        <dbReference type="PROSITE-ProRule" id="PRU01012"/>
    </source>
</evidence>
<evidence type="ECO:0000256" key="4">
    <source>
        <dbReference type="SAM" id="MobiDB-lite"/>
    </source>
</evidence>
<evidence type="ECO:0000269" key="5">
    <source>
    </source>
</evidence>
<evidence type="ECO:0000269" key="6">
    <source>
    </source>
</evidence>
<evidence type="ECO:0000269" key="7">
    <source>
    </source>
</evidence>
<evidence type="ECO:0000269" key="8">
    <source>
    </source>
</evidence>
<evidence type="ECO:0000303" key="9">
    <source>
    </source>
</evidence>
<evidence type="ECO:0000305" key="10"/>
<evidence type="ECO:0000312" key="11">
    <source>
        <dbReference type="FlyBase" id="FBgn0034351"/>
    </source>
</evidence>